<keyword id="KW-1185">Reference proteome</keyword>
<sequence length="419" mass="43833">MAKTGVEILCVGTELLLGDILNGNARWLAQRLADLGLPHFRQTVVGDNTERLMGAVREAAGRCRILITTGGLGPTPDDLTTAALAAAFDTPLEERPELWEEIQAKLSAGGRAVAASNRSQAFLPIGADVLPNSLGSAPGMIWSPCPDFTILTFPGVPSEMRSMWVETAEPWLRQNAGAPSAFVSRRLHFTGIGESDLAEQVGDLLDSANPTVAPYAALGDVTLRLTASGSSPGQAEAVLHPMEEQLLQRTGRFCYGRDDDTLAAVVLRLLGEAGQTLAVAESCTGGALGAALTAVPGSSAVFSGGVIAYSNAVKQQLLGVPAALLDEHGAVSEPVVKAMAEGLRSRFHCDWGIAISGVAGPGGGTIEKPVGMVCLALAGREGCDLWVQRFGARRGRSAVQQLSVIRALDRLRLRLLAQS</sequence>
<accession>Q3AW20</accession>
<organism>
    <name type="scientific">Synechococcus sp. (strain CC9902)</name>
    <dbReference type="NCBI Taxonomy" id="316279"/>
    <lineage>
        <taxon>Bacteria</taxon>
        <taxon>Bacillati</taxon>
        <taxon>Cyanobacteriota</taxon>
        <taxon>Cyanophyceae</taxon>
        <taxon>Synechococcales</taxon>
        <taxon>Synechococcaceae</taxon>
        <taxon>Synechococcus</taxon>
    </lineage>
</organism>
<feature type="chain" id="PRO_1000058742" description="CinA-like protein">
    <location>
        <begin position="1"/>
        <end position="419"/>
    </location>
</feature>
<evidence type="ECO:0000255" key="1">
    <source>
        <dbReference type="HAMAP-Rule" id="MF_00226"/>
    </source>
</evidence>
<dbReference type="EMBL" id="CP000097">
    <property type="protein sequence ID" value="ABB27047.1"/>
    <property type="molecule type" value="Genomic_DNA"/>
</dbReference>
<dbReference type="RefSeq" id="WP_011360831.1">
    <property type="nucleotide sequence ID" value="NC_007513.1"/>
</dbReference>
<dbReference type="SMR" id="Q3AW20"/>
<dbReference type="STRING" id="316279.Syncc9902_2089"/>
<dbReference type="KEGG" id="sye:Syncc9902_2089"/>
<dbReference type="eggNOG" id="COG1058">
    <property type="taxonomic scope" value="Bacteria"/>
</dbReference>
<dbReference type="eggNOG" id="COG1546">
    <property type="taxonomic scope" value="Bacteria"/>
</dbReference>
<dbReference type="HOGENOM" id="CLU_030805_9_3_3"/>
<dbReference type="OrthoDB" id="9801454at2"/>
<dbReference type="Proteomes" id="UP000002712">
    <property type="component" value="Chromosome"/>
</dbReference>
<dbReference type="CDD" id="cd00885">
    <property type="entry name" value="cinA"/>
    <property type="match status" value="1"/>
</dbReference>
<dbReference type="Gene3D" id="3.30.70.2860">
    <property type="match status" value="1"/>
</dbReference>
<dbReference type="Gene3D" id="3.90.950.20">
    <property type="entry name" value="CinA-like"/>
    <property type="match status" value="1"/>
</dbReference>
<dbReference type="Gene3D" id="3.40.980.10">
    <property type="entry name" value="MoaB/Mog-like domain"/>
    <property type="match status" value="1"/>
</dbReference>
<dbReference type="HAMAP" id="MF_00226_B">
    <property type="entry name" value="CinA_B"/>
    <property type="match status" value="1"/>
</dbReference>
<dbReference type="InterPro" id="IPR050101">
    <property type="entry name" value="CinA"/>
</dbReference>
<dbReference type="InterPro" id="IPR036653">
    <property type="entry name" value="CinA-like_C"/>
</dbReference>
<dbReference type="InterPro" id="IPR008136">
    <property type="entry name" value="CinA_C"/>
</dbReference>
<dbReference type="InterPro" id="IPR041424">
    <property type="entry name" value="CinA_KH"/>
</dbReference>
<dbReference type="InterPro" id="IPR008135">
    <property type="entry name" value="Competence-induced_CinA"/>
</dbReference>
<dbReference type="InterPro" id="IPR036425">
    <property type="entry name" value="MoaB/Mog-like_dom_sf"/>
</dbReference>
<dbReference type="InterPro" id="IPR001453">
    <property type="entry name" value="MoaB/Mog_dom"/>
</dbReference>
<dbReference type="NCBIfam" id="TIGR00200">
    <property type="entry name" value="cinA_nterm"/>
    <property type="match status" value="1"/>
</dbReference>
<dbReference type="NCBIfam" id="TIGR00199">
    <property type="entry name" value="PncC_domain"/>
    <property type="match status" value="1"/>
</dbReference>
<dbReference type="NCBIfam" id="NF001813">
    <property type="entry name" value="PRK00549.1"/>
    <property type="match status" value="1"/>
</dbReference>
<dbReference type="PANTHER" id="PTHR13939">
    <property type="entry name" value="NICOTINAMIDE-NUCLEOTIDE AMIDOHYDROLASE PNCC"/>
    <property type="match status" value="1"/>
</dbReference>
<dbReference type="PANTHER" id="PTHR13939:SF0">
    <property type="entry name" value="NMN AMIDOHYDROLASE-LIKE PROTEIN YFAY"/>
    <property type="match status" value="1"/>
</dbReference>
<dbReference type="Pfam" id="PF02464">
    <property type="entry name" value="CinA"/>
    <property type="match status" value="1"/>
</dbReference>
<dbReference type="Pfam" id="PF18146">
    <property type="entry name" value="CinA_KH"/>
    <property type="match status" value="1"/>
</dbReference>
<dbReference type="Pfam" id="PF00994">
    <property type="entry name" value="MoCF_biosynth"/>
    <property type="match status" value="1"/>
</dbReference>
<dbReference type="PIRSF" id="PIRSF006728">
    <property type="entry name" value="CinA"/>
    <property type="match status" value="1"/>
</dbReference>
<dbReference type="SMART" id="SM00852">
    <property type="entry name" value="MoCF_biosynth"/>
    <property type="match status" value="1"/>
</dbReference>
<dbReference type="SUPFAM" id="SSF142433">
    <property type="entry name" value="CinA-like"/>
    <property type="match status" value="1"/>
</dbReference>
<dbReference type="SUPFAM" id="SSF53218">
    <property type="entry name" value="Molybdenum cofactor biosynthesis proteins"/>
    <property type="match status" value="1"/>
</dbReference>
<reference key="1">
    <citation type="submission" date="2005-08" db="EMBL/GenBank/DDBJ databases">
        <title>Complete sequence of Synechococcus sp. CC9902.</title>
        <authorList>
            <person name="Copeland A."/>
            <person name="Lucas S."/>
            <person name="Lapidus A."/>
            <person name="Barry K."/>
            <person name="Detter J.C."/>
            <person name="Glavina T."/>
            <person name="Hammon N."/>
            <person name="Israni S."/>
            <person name="Pitluck S."/>
            <person name="Martinez M."/>
            <person name="Schmutz J."/>
            <person name="Larimer F."/>
            <person name="Land M."/>
            <person name="Kyrpides N."/>
            <person name="Ivanova N."/>
            <person name="Richardson P."/>
        </authorList>
    </citation>
    <scope>NUCLEOTIDE SEQUENCE [LARGE SCALE GENOMIC DNA]</scope>
    <source>
        <strain>CC9902</strain>
    </source>
</reference>
<proteinExistence type="inferred from homology"/>
<comment type="similarity">
    <text evidence="1">Belongs to the CinA family.</text>
</comment>
<name>CINAL_SYNS9</name>
<gene>
    <name type="ordered locus">Syncc9902_2089</name>
</gene>
<protein>
    <recommendedName>
        <fullName evidence="1">CinA-like protein</fullName>
    </recommendedName>
</protein>